<organism>
    <name type="scientific">Escherichia coli (strain K12)</name>
    <dbReference type="NCBI Taxonomy" id="83333"/>
    <lineage>
        <taxon>Bacteria</taxon>
        <taxon>Pseudomonadati</taxon>
        <taxon>Pseudomonadota</taxon>
        <taxon>Gammaproteobacteria</taxon>
        <taxon>Enterobacterales</taxon>
        <taxon>Enterobacteriaceae</taxon>
        <taxon>Escherichia</taxon>
    </lineage>
</organism>
<name>YIBH_ECOLI</name>
<gene>
    <name type="primary">yibH</name>
    <name type="ordered locus">b3597</name>
    <name type="ordered locus">JW3571</name>
</gene>
<evidence type="ECO:0000255" key="1"/>
<evidence type="ECO:0000305" key="2"/>
<reference key="1">
    <citation type="journal article" date="1993" name="J. Bacteriol.">
        <title>Rhs elements of Escherichia coli K-12: complex composites of shared and unique components that have different evolutionary histories.</title>
        <authorList>
            <person name="Zhao S."/>
            <person name="Sandt C.H."/>
            <person name="Feulner G."/>
            <person name="Vlazny D.A."/>
            <person name="Gray J.A."/>
            <person name="Hill C.W."/>
        </authorList>
    </citation>
    <scope>NUCLEOTIDE SEQUENCE [GENOMIC DNA]</scope>
    <source>
        <strain>K12</strain>
    </source>
</reference>
<reference key="2">
    <citation type="submission" date="1993-06" db="EMBL/GenBank/DDBJ databases">
        <authorList>
            <person name="Hill C.W."/>
        </authorList>
    </citation>
    <scope>SEQUENCE REVISION TO 205</scope>
    <source>
        <strain>K12</strain>
    </source>
</reference>
<reference key="3">
    <citation type="journal article" date="1994" name="Nucleic Acids Res.">
        <title>Analysis of the Escherichia coli genome. V. DNA sequence of the region from 76.0 to 81.5 minutes.</title>
        <authorList>
            <person name="Sofia H.J."/>
            <person name="Burland V."/>
            <person name="Daniels D.L."/>
            <person name="Plunkett G. III"/>
            <person name="Blattner F.R."/>
        </authorList>
    </citation>
    <scope>NUCLEOTIDE SEQUENCE [LARGE SCALE GENOMIC DNA]</scope>
    <source>
        <strain>K12 / MG1655 / ATCC 47076</strain>
    </source>
</reference>
<reference key="4">
    <citation type="journal article" date="1997" name="Science">
        <title>The complete genome sequence of Escherichia coli K-12.</title>
        <authorList>
            <person name="Blattner F.R."/>
            <person name="Plunkett G. III"/>
            <person name="Bloch C.A."/>
            <person name="Perna N.T."/>
            <person name="Burland V."/>
            <person name="Riley M."/>
            <person name="Collado-Vides J."/>
            <person name="Glasner J.D."/>
            <person name="Rode C.K."/>
            <person name="Mayhew G.F."/>
            <person name="Gregor J."/>
            <person name="Davis N.W."/>
            <person name="Kirkpatrick H.A."/>
            <person name="Goeden M.A."/>
            <person name="Rose D.J."/>
            <person name="Mau B."/>
            <person name="Shao Y."/>
        </authorList>
    </citation>
    <scope>NUCLEOTIDE SEQUENCE [LARGE SCALE GENOMIC DNA]</scope>
    <source>
        <strain>K12 / MG1655 / ATCC 47076</strain>
    </source>
</reference>
<reference key="5">
    <citation type="journal article" date="2006" name="Mol. Syst. Biol.">
        <title>Highly accurate genome sequences of Escherichia coli K-12 strains MG1655 and W3110.</title>
        <authorList>
            <person name="Hayashi K."/>
            <person name="Morooka N."/>
            <person name="Yamamoto Y."/>
            <person name="Fujita K."/>
            <person name="Isono K."/>
            <person name="Choi S."/>
            <person name="Ohtsubo E."/>
            <person name="Baba T."/>
            <person name="Wanner B.L."/>
            <person name="Mori H."/>
            <person name="Horiuchi T."/>
        </authorList>
    </citation>
    <scope>NUCLEOTIDE SEQUENCE [LARGE SCALE GENOMIC DNA]</scope>
    <source>
        <strain>K12 / W3110 / ATCC 27325 / DSM 5911</strain>
    </source>
</reference>
<reference key="6">
    <citation type="journal article" date="2005" name="Science">
        <title>Global topology analysis of the Escherichia coli inner membrane proteome.</title>
        <authorList>
            <person name="Daley D.O."/>
            <person name="Rapp M."/>
            <person name="Granseth E."/>
            <person name="Melen K."/>
            <person name="Drew D."/>
            <person name="von Heijne G."/>
        </authorList>
    </citation>
    <scope>TOPOLOGY [LARGE SCALE ANALYSIS]</scope>
    <source>
        <strain>K12 / MG1655 / ATCC 47076</strain>
    </source>
</reference>
<proteinExistence type="evidence at protein level"/>
<feature type="chain" id="PRO_0000201895" description="Inner membrane protein YibH">
    <location>
        <begin position="1"/>
        <end position="378"/>
    </location>
</feature>
<feature type="topological domain" description="Periplasmic" evidence="1">
    <location>
        <begin position="1"/>
        <end position="3"/>
    </location>
</feature>
<feature type="transmembrane region" description="Helical" evidence="1">
    <location>
        <begin position="4"/>
        <end position="24"/>
    </location>
</feature>
<feature type="topological domain" description="Cytoplasmic" evidence="1">
    <location>
        <begin position="25"/>
        <end position="26"/>
    </location>
</feature>
<feature type="transmembrane region" description="Helical" evidence="1">
    <location>
        <begin position="27"/>
        <end position="47"/>
    </location>
</feature>
<feature type="topological domain" description="Periplasmic" evidence="1">
    <location>
        <begin position="48"/>
        <end position="54"/>
    </location>
</feature>
<feature type="transmembrane region" description="Helical" evidence="1">
    <location>
        <begin position="55"/>
        <end position="75"/>
    </location>
</feature>
<feature type="topological domain" description="Cytoplasmic" evidence="1">
    <location>
        <begin position="76"/>
        <end position="232"/>
    </location>
</feature>
<feature type="transmembrane region" description="Helical" evidence="1">
    <location>
        <begin position="233"/>
        <end position="253"/>
    </location>
</feature>
<feature type="topological domain" description="Periplasmic" evidence="1">
    <location>
        <begin position="254"/>
        <end position="280"/>
    </location>
</feature>
<feature type="transmembrane region" description="Helical" evidence="1">
    <location>
        <begin position="281"/>
        <end position="301"/>
    </location>
</feature>
<feature type="topological domain" description="Cytoplasmic" evidence="1">
    <location>
        <begin position="302"/>
        <end position="309"/>
    </location>
</feature>
<feature type="transmembrane region" description="Helical" evidence="1">
    <location>
        <begin position="310"/>
        <end position="330"/>
    </location>
</feature>
<feature type="topological domain" description="Periplasmic" evidence="1">
    <location>
        <begin position="331"/>
        <end position="378"/>
    </location>
</feature>
<accession>P0AFV0</accession>
<accession>P32107</accession>
<accession>Q2M7R0</accession>
<protein>
    <recommendedName>
        <fullName>Inner membrane protein YibH</fullName>
    </recommendedName>
</protein>
<comment type="subcellular location">
    <subcellularLocation>
        <location>Cell inner membrane</location>
        <topology>Multi-pass membrane protein</topology>
    </subcellularLocation>
</comment>
<comment type="similarity">
    <text evidence="2">Belongs to the membrane fusion protein (MFP) (TC 8.A.1) family.</text>
</comment>
<keyword id="KW-0997">Cell inner membrane</keyword>
<keyword id="KW-1003">Cell membrane</keyword>
<keyword id="KW-0472">Membrane</keyword>
<keyword id="KW-1185">Reference proteome</keyword>
<keyword id="KW-0812">Transmembrane</keyword>
<keyword id="KW-1133">Transmembrane helix</keyword>
<sequence>MDLLIVLTYVALAWAVFKIFRIPVNQWTLATAALGGVFLVSGLILLMNYNHPYTFTAQKAVIAIPITPQVTGIVTEVTDKNNQLIQKGEVLFKLDPVRYQARVDRLQADLMTATHNIKTLRAQLTEAQANTTQVSAERDRLFKNYQRYLKGSQAAVNPFSERDIDDARQNFLAQDALVKGSVAEQAQIQSQLDSMVNGEQSQIVSLRAQLTEAKYNLEQTVIRAPSNGYVTQVLIRPGTYAAALPLRPVMVFIPEQKRQIVAQFRQNSLLRLKPGDDAEVVFNALPGQVFHGKLTSILPVVPGGSYQAQGVLQSLTVVPGTDGVLGTIELDPNDDIDALPDGIYAQVAVYSDHFSHVSVMRKVLLRMTSWMHYLYLDH</sequence>
<dbReference type="EMBL" id="L19044">
    <property type="protein sequence ID" value="AAC95068.1"/>
    <property type="molecule type" value="Genomic_DNA"/>
</dbReference>
<dbReference type="EMBL" id="U00039">
    <property type="protein sequence ID" value="AAB18574.1"/>
    <property type="molecule type" value="Genomic_DNA"/>
</dbReference>
<dbReference type="EMBL" id="U00096">
    <property type="protein sequence ID" value="AAC76621.1"/>
    <property type="molecule type" value="Genomic_DNA"/>
</dbReference>
<dbReference type="EMBL" id="AP009048">
    <property type="protein sequence ID" value="BAE77696.1"/>
    <property type="molecule type" value="Genomic_DNA"/>
</dbReference>
<dbReference type="PIR" id="S47818">
    <property type="entry name" value="S47818"/>
</dbReference>
<dbReference type="RefSeq" id="NP_418054.1">
    <property type="nucleotide sequence ID" value="NC_000913.3"/>
</dbReference>
<dbReference type="RefSeq" id="WP_000364939.1">
    <property type="nucleotide sequence ID" value="NZ_STEB01000024.1"/>
</dbReference>
<dbReference type="SMR" id="P0AFV0"/>
<dbReference type="BioGRID" id="4261667">
    <property type="interactions" value="268"/>
</dbReference>
<dbReference type="FunCoup" id="P0AFV0">
    <property type="interactions" value="130"/>
</dbReference>
<dbReference type="STRING" id="511145.b3597"/>
<dbReference type="PaxDb" id="511145-b3597"/>
<dbReference type="EnsemblBacteria" id="AAC76621">
    <property type="protein sequence ID" value="AAC76621"/>
    <property type="gene ID" value="b3597"/>
</dbReference>
<dbReference type="GeneID" id="948110"/>
<dbReference type="KEGG" id="ecj:JW3571"/>
<dbReference type="KEGG" id="eco:b3597"/>
<dbReference type="KEGG" id="ecoc:C3026_19505"/>
<dbReference type="PATRIC" id="fig|511145.12.peg.3715"/>
<dbReference type="EchoBASE" id="EB1714"/>
<dbReference type="eggNOG" id="COG1566">
    <property type="taxonomic scope" value="Bacteria"/>
</dbReference>
<dbReference type="HOGENOM" id="CLU_018816_15_3_6"/>
<dbReference type="InParanoid" id="P0AFV0"/>
<dbReference type="OMA" id="AWAIFKI"/>
<dbReference type="OrthoDB" id="286173at2"/>
<dbReference type="PhylomeDB" id="P0AFV0"/>
<dbReference type="BioCyc" id="EcoCyc:EG11764-MONOMER"/>
<dbReference type="PRO" id="PR:P0AFV0"/>
<dbReference type="Proteomes" id="UP000000625">
    <property type="component" value="Chromosome"/>
</dbReference>
<dbReference type="GO" id="GO:0005886">
    <property type="term" value="C:plasma membrane"/>
    <property type="evidence" value="ECO:0000314"/>
    <property type="project" value="EcoCyc"/>
</dbReference>
<dbReference type="GO" id="GO:0006974">
    <property type="term" value="P:DNA damage response"/>
    <property type="evidence" value="ECO:0000270"/>
    <property type="project" value="EcoliWiki"/>
</dbReference>
<dbReference type="GO" id="GO:0055085">
    <property type="term" value="P:transmembrane transport"/>
    <property type="evidence" value="ECO:0007669"/>
    <property type="project" value="InterPro"/>
</dbReference>
<dbReference type="FunFam" id="2.40.30.170:FF:000004">
    <property type="entry name" value="Auxiliary transport protein, membrane fusion protein family"/>
    <property type="match status" value="1"/>
</dbReference>
<dbReference type="FunFam" id="2.40.50.100:FF:000035">
    <property type="entry name" value="Auxiliary transport protein, membrane fusion protein family"/>
    <property type="match status" value="1"/>
</dbReference>
<dbReference type="Gene3D" id="2.40.30.170">
    <property type="match status" value="1"/>
</dbReference>
<dbReference type="Gene3D" id="2.40.50.100">
    <property type="match status" value="1"/>
</dbReference>
<dbReference type="InterPro" id="IPR043602">
    <property type="entry name" value="CusB-like_dom_1"/>
</dbReference>
<dbReference type="InterPro" id="IPR032317">
    <property type="entry name" value="CusB_D23"/>
</dbReference>
<dbReference type="InterPro" id="IPR050739">
    <property type="entry name" value="MFP"/>
</dbReference>
<dbReference type="PANTHER" id="PTHR30386:SF18">
    <property type="entry name" value="INNER MEMBRANE PROTEIN YIAV-RELATED"/>
    <property type="match status" value="1"/>
</dbReference>
<dbReference type="PANTHER" id="PTHR30386">
    <property type="entry name" value="MEMBRANE FUSION SUBUNIT OF EMRAB-TOLC MULTIDRUG EFFLUX PUMP"/>
    <property type="match status" value="1"/>
</dbReference>
<dbReference type="Pfam" id="PF00529">
    <property type="entry name" value="CusB_dom_1"/>
    <property type="match status" value="1"/>
</dbReference>
<dbReference type="Pfam" id="PF16576">
    <property type="entry name" value="HlyD_D23"/>
    <property type="match status" value="1"/>
</dbReference>
<dbReference type="SUPFAM" id="SSF111369">
    <property type="entry name" value="HlyD-like secretion proteins"/>
    <property type="match status" value="1"/>
</dbReference>